<dbReference type="EC" id="7.1.1.-"/>
<dbReference type="EMBL" id="AE000516">
    <property type="protein sequence ID" value="AAK47576.1"/>
    <property type="molecule type" value="Genomic_DNA"/>
</dbReference>
<dbReference type="PIR" id="F70647">
    <property type="entry name" value="F70647"/>
</dbReference>
<dbReference type="RefSeq" id="WP_003416434.1">
    <property type="nucleotide sequence ID" value="NZ_KK341227.1"/>
</dbReference>
<dbReference type="SMR" id="P9WIV4"/>
<dbReference type="KEGG" id="mtc:MT3237"/>
<dbReference type="PATRIC" id="fig|83331.31.peg.3485"/>
<dbReference type="HOGENOM" id="CLU_054537_1_0_11"/>
<dbReference type="Proteomes" id="UP000001020">
    <property type="component" value="Chromosome"/>
</dbReference>
<dbReference type="GO" id="GO:0051537">
    <property type="term" value="F:2 iron, 2 sulfur cluster binding"/>
    <property type="evidence" value="ECO:0007669"/>
    <property type="project" value="UniProtKB-KW"/>
</dbReference>
<dbReference type="GO" id="GO:0046872">
    <property type="term" value="F:metal ion binding"/>
    <property type="evidence" value="ECO:0007669"/>
    <property type="project" value="UniProtKB-KW"/>
</dbReference>
<dbReference type="GO" id="GO:0003954">
    <property type="term" value="F:NADH dehydrogenase activity"/>
    <property type="evidence" value="ECO:0007669"/>
    <property type="project" value="TreeGrafter"/>
</dbReference>
<dbReference type="GO" id="GO:0048038">
    <property type="term" value="F:quinone binding"/>
    <property type="evidence" value="ECO:0007669"/>
    <property type="project" value="UniProtKB-KW"/>
</dbReference>
<dbReference type="CDD" id="cd03064">
    <property type="entry name" value="TRX_Fd_NuoE"/>
    <property type="match status" value="1"/>
</dbReference>
<dbReference type="FunFam" id="1.10.10.1590:FF:000001">
    <property type="entry name" value="NADH-quinone oxidoreductase subunit E"/>
    <property type="match status" value="1"/>
</dbReference>
<dbReference type="FunFam" id="3.40.30.10:FF:000057">
    <property type="entry name" value="NADH-quinone oxidoreductase subunit E"/>
    <property type="match status" value="1"/>
</dbReference>
<dbReference type="Gene3D" id="3.40.30.10">
    <property type="entry name" value="Glutaredoxin"/>
    <property type="match status" value="1"/>
</dbReference>
<dbReference type="Gene3D" id="1.10.10.1590">
    <property type="entry name" value="NADH-quinone oxidoreductase subunit E"/>
    <property type="match status" value="1"/>
</dbReference>
<dbReference type="InterPro" id="IPR002023">
    <property type="entry name" value="NuoE-like"/>
</dbReference>
<dbReference type="InterPro" id="IPR042128">
    <property type="entry name" value="NuoE_dom"/>
</dbReference>
<dbReference type="InterPro" id="IPR041921">
    <property type="entry name" value="NuoE_N"/>
</dbReference>
<dbReference type="InterPro" id="IPR036249">
    <property type="entry name" value="Thioredoxin-like_sf"/>
</dbReference>
<dbReference type="NCBIfam" id="NF005721">
    <property type="entry name" value="PRK07539.1-1"/>
    <property type="match status" value="1"/>
</dbReference>
<dbReference type="PANTHER" id="PTHR10371:SF3">
    <property type="entry name" value="NADH DEHYDROGENASE [UBIQUINONE] FLAVOPROTEIN 2, MITOCHONDRIAL"/>
    <property type="match status" value="1"/>
</dbReference>
<dbReference type="PANTHER" id="PTHR10371">
    <property type="entry name" value="NADH DEHYDROGENASE UBIQUINONE FLAVOPROTEIN 2, MITOCHONDRIAL"/>
    <property type="match status" value="1"/>
</dbReference>
<dbReference type="Pfam" id="PF01257">
    <property type="entry name" value="2Fe-2S_thioredx"/>
    <property type="match status" value="1"/>
</dbReference>
<dbReference type="PIRSF" id="PIRSF000216">
    <property type="entry name" value="NADH_DH_24kDa"/>
    <property type="match status" value="1"/>
</dbReference>
<dbReference type="SUPFAM" id="SSF52833">
    <property type="entry name" value="Thioredoxin-like"/>
    <property type="match status" value="1"/>
</dbReference>
<dbReference type="PROSITE" id="PS01099">
    <property type="entry name" value="COMPLEX1_24K"/>
    <property type="match status" value="1"/>
</dbReference>
<protein>
    <recommendedName>
        <fullName>NADH-quinone oxidoreductase subunit E</fullName>
        <ecNumber>7.1.1.-</ecNumber>
    </recommendedName>
    <alternativeName>
        <fullName>NADH dehydrogenase I subunit E</fullName>
    </alternativeName>
    <alternativeName>
        <fullName>NDH-1 subunit E</fullName>
    </alternativeName>
</protein>
<gene>
    <name type="primary">nuoE</name>
    <name type="ordered locus">MT3237</name>
</gene>
<comment type="function">
    <text evidence="1">NDH-1 shuttles electrons from NADH, via FMN and iron-sulfur (Fe-S) centers, to quinones in the respiratory chain. The immediate electron acceptor for the enzyme in this species is believed to be menaquinone. Couples the redox reaction to proton translocation (for every two electrons transferred, four hydrogen ions are translocated across the cytoplasmic membrane), and thus conserves the redox energy in a proton gradient (By similarity).</text>
</comment>
<comment type="catalytic activity">
    <reaction>
        <text>a quinone + NADH + 5 H(+)(in) = a quinol + NAD(+) + 4 H(+)(out)</text>
        <dbReference type="Rhea" id="RHEA:57888"/>
        <dbReference type="ChEBI" id="CHEBI:15378"/>
        <dbReference type="ChEBI" id="CHEBI:24646"/>
        <dbReference type="ChEBI" id="CHEBI:57540"/>
        <dbReference type="ChEBI" id="CHEBI:57945"/>
        <dbReference type="ChEBI" id="CHEBI:132124"/>
    </reaction>
</comment>
<comment type="cofactor">
    <cofactor evidence="4">
        <name>[2Fe-2S] cluster</name>
        <dbReference type="ChEBI" id="CHEBI:190135"/>
    </cofactor>
    <text evidence="4">Binds 1 [2Fe-2S] cluster.</text>
</comment>
<comment type="similarity">
    <text evidence="4">Belongs to the complex I 24 kDa subunit family.</text>
</comment>
<reference key="1">
    <citation type="journal article" date="2002" name="J. Bacteriol.">
        <title>Whole-genome comparison of Mycobacterium tuberculosis clinical and laboratory strains.</title>
        <authorList>
            <person name="Fleischmann R.D."/>
            <person name="Alland D."/>
            <person name="Eisen J.A."/>
            <person name="Carpenter L."/>
            <person name="White O."/>
            <person name="Peterson J.D."/>
            <person name="DeBoy R.T."/>
            <person name="Dodson R.J."/>
            <person name="Gwinn M.L."/>
            <person name="Haft D.H."/>
            <person name="Hickey E.K."/>
            <person name="Kolonay J.F."/>
            <person name="Nelson W.C."/>
            <person name="Umayam L.A."/>
            <person name="Ermolaeva M.D."/>
            <person name="Salzberg S.L."/>
            <person name="Delcher A."/>
            <person name="Utterback T.R."/>
            <person name="Weidman J.F."/>
            <person name="Khouri H.M."/>
            <person name="Gill J."/>
            <person name="Mikula A."/>
            <person name="Bishai W."/>
            <person name="Jacobs W.R. Jr."/>
            <person name="Venter J.C."/>
            <person name="Fraser C.M."/>
        </authorList>
    </citation>
    <scope>NUCLEOTIDE SEQUENCE [LARGE SCALE GENOMIC DNA]</scope>
    <source>
        <strain>CDC 1551 / Oshkosh</strain>
    </source>
</reference>
<organism>
    <name type="scientific">Mycobacterium tuberculosis (strain CDC 1551 / Oshkosh)</name>
    <dbReference type="NCBI Taxonomy" id="83331"/>
    <lineage>
        <taxon>Bacteria</taxon>
        <taxon>Bacillati</taxon>
        <taxon>Actinomycetota</taxon>
        <taxon>Actinomycetes</taxon>
        <taxon>Mycobacteriales</taxon>
        <taxon>Mycobacteriaceae</taxon>
        <taxon>Mycobacterium</taxon>
        <taxon>Mycobacterium tuberculosis complex</taxon>
    </lineage>
</organism>
<sequence>MTQPPGQPVFIRLGPPPDEPNQFVVEGAPRSYPPDVLARLEVDAKEIIGRYPDRRSALLPLLHLVQGEDSYLTPAGLRFCADQLGLTGAEVSAVASFYTMYRRRPTGEYLVGVCTNTLCAVMGGDAIFDRLKEHLGVGHDETTSDGVVTLQHIECNAACDYAPVVMVNWEFFDNQTPESARELVDSLRSDTPKAPTRGAPLCGFRQTSRILAGLPDQRPDEGQGGPGAPTLAGLQVARKNDMQAPPTPGADE</sequence>
<evidence type="ECO:0000250" key="1"/>
<evidence type="ECO:0000255" key="2"/>
<evidence type="ECO:0000256" key="3">
    <source>
        <dbReference type="SAM" id="MobiDB-lite"/>
    </source>
</evidence>
<evidence type="ECO:0000305" key="4"/>
<keyword id="KW-0001">2Fe-2S</keyword>
<keyword id="KW-0408">Iron</keyword>
<keyword id="KW-0411">Iron-sulfur</keyword>
<keyword id="KW-0479">Metal-binding</keyword>
<keyword id="KW-0520">NAD</keyword>
<keyword id="KW-0874">Quinone</keyword>
<keyword id="KW-1185">Reference proteome</keyword>
<keyword id="KW-1278">Translocase</keyword>
<proteinExistence type="inferred from homology"/>
<feature type="chain" id="PRO_0000427939" description="NADH-quinone oxidoreductase subunit E">
    <location>
        <begin position="1"/>
        <end position="252"/>
    </location>
</feature>
<feature type="region of interest" description="Disordered" evidence="3">
    <location>
        <begin position="211"/>
        <end position="252"/>
    </location>
</feature>
<feature type="binding site" evidence="2">
    <location>
        <position position="114"/>
    </location>
    <ligand>
        <name>[2Fe-2S] cluster</name>
        <dbReference type="ChEBI" id="CHEBI:190135"/>
    </ligand>
</feature>
<feature type="binding site" evidence="2">
    <location>
        <position position="119"/>
    </location>
    <ligand>
        <name>[2Fe-2S] cluster</name>
        <dbReference type="ChEBI" id="CHEBI:190135"/>
    </ligand>
</feature>
<feature type="binding site" evidence="2">
    <location>
        <position position="155"/>
    </location>
    <ligand>
        <name>[2Fe-2S] cluster</name>
        <dbReference type="ChEBI" id="CHEBI:190135"/>
    </ligand>
</feature>
<feature type="binding site" evidence="2">
    <location>
        <position position="159"/>
    </location>
    <ligand>
        <name>[2Fe-2S] cluster</name>
        <dbReference type="ChEBI" id="CHEBI:190135"/>
    </ligand>
</feature>
<name>NUOE_MYCTO</name>
<accession>P9WIV4</accession>
<accession>L0TEG3</accession>
<accession>P65573</accession>
<accession>P95177</accession>